<comment type="function">
    <text evidence="4">Odorant receptor.</text>
</comment>
<comment type="subcellular location">
    <subcellularLocation>
        <location>Cell membrane</location>
        <topology>Multi-pass membrane protein</topology>
    </subcellularLocation>
</comment>
<comment type="similarity">
    <text evidence="2">Belongs to the G-protein coupled receptor 1 family.</text>
</comment>
<comment type="online information" name="Human Olfactory Receptor Data Exploratorium (HORDE)">
    <link uri="http://genome.weizmann.ac.il/horde/card/index/symbol:OR4N4"/>
</comment>
<evidence type="ECO:0000255" key="1"/>
<evidence type="ECO:0000255" key="2">
    <source>
        <dbReference type="PROSITE-ProRule" id="PRU00521"/>
    </source>
</evidence>
<evidence type="ECO:0000269" key="3">
    <source ref="1"/>
</evidence>
<evidence type="ECO:0000305" key="4"/>
<protein>
    <recommendedName>
        <fullName>Olfactory receptor 4N4</fullName>
    </recommendedName>
    <alternativeName>
        <fullName>Olfactory receptor OR15-1</fullName>
    </alternativeName>
    <alternativeName>
        <fullName>Olfactory receptor OR15-5</fullName>
    </alternativeName>
</protein>
<organism>
    <name type="scientific">Homo sapiens</name>
    <name type="common">Human</name>
    <dbReference type="NCBI Taxonomy" id="9606"/>
    <lineage>
        <taxon>Eukaryota</taxon>
        <taxon>Metazoa</taxon>
        <taxon>Chordata</taxon>
        <taxon>Craniata</taxon>
        <taxon>Vertebrata</taxon>
        <taxon>Euteleostomi</taxon>
        <taxon>Mammalia</taxon>
        <taxon>Eutheria</taxon>
        <taxon>Euarchontoglires</taxon>
        <taxon>Primates</taxon>
        <taxon>Haplorrhini</taxon>
        <taxon>Catarrhini</taxon>
        <taxon>Hominidae</taxon>
        <taxon>Homo</taxon>
    </lineage>
</organism>
<dbReference type="EMBL" id="AB065653">
    <property type="protein sequence ID" value="BAC05879.1"/>
    <property type="molecule type" value="Genomic_DNA"/>
</dbReference>
<dbReference type="EMBL" id="AB065904">
    <property type="protein sequence ID" value="BAC06119.1"/>
    <property type="molecule type" value="Genomic_DNA"/>
</dbReference>
<dbReference type="EMBL" id="CH878499">
    <property type="protein sequence ID" value="EAW50561.1"/>
    <property type="molecule type" value="Genomic_DNA"/>
</dbReference>
<dbReference type="EMBL" id="BC136597">
    <property type="protein sequence ID" value="AAI36598.1"/>
    <property type="molecule type" value="mRNA"/>
</dbReference>
<dbReference type="EMBL" id="BC136598">
    <property type="protein sequence ID" value="AAI36599.1"/>
    <property type="molecule type" value="mRNA"/>
</dbReference>
<dbReference type="EMBL" id="BK004406">
    <property type="protein sequence ID" value="DAA04804.1"/>
    <property type="molecule type" value="Genomic_DNA"/>
</dbReference>
<dbReference type="EMBL" id="BK004479">
    <property type="protein sequence ID" value="DAA04877.1"/>
    <property type="molecule type" value="Genomic_DNA"/>
</dbReference>
<dbReference type="CCDS" id="CCDS32173.1"/>
<dbReference type="RefSeq" id="NP_001005241.2">
    <property type="nucleotide sequence ID" value="NM_001005241.4"/>
</dbReference>
<dbReference type="RefSeq" id="XP_011544524.1">
    <property type="nucleotide sequence ID" value="XM_011546222.1"/>
</dbReference>
<dbReference type="RefSeq" id="XP_011544526.1">
    <property type="nucleotide sequence ID" value="XM_011546224.2"/>
</dbReference>
<dbReference type="RefSeq" id="XP_016885604.1">
    <property type="nucleotide sequence ID" value="XM_017030115.1"/>
</dbReference>
<dbReference type="RefSeq" id="XP_016885605.1">
    <property type="nucleotide sequence ID" value="XM_017030116.1"/>
</dbReference>
<dbReference type="RefSeq" id="XP_016885606.1">
    <property type="nucleotide sequence ID" value="XM_017030117.1"/>
</dbReference>
<dbReference type="RefSeq" id="XP_016885607.1">
    <property type="nucleotide sequence ID" value="XM_017030118.1"/>
</dbReference>
<dbReference type="SMR" id="Q8N0Y3"/>
<dbReference type="BioGRID" id="129649">
    <property type="interactions" value="17"/>
</dbReference>
<dbReference type="FunCoup" id="Q8N0Y3">
    <property type="interactions" value="416"/>
</dbReference>
<dbReference type="STRING" id="9606.ENSP00000332500"/>
<dbReference type="GlyCosmos" id="Q8N0Y3">
    <property type="glycosylation" value="1 site, No reported glycans"/>
</dbReference>
<dbReference type="GlyGen" id="Q8N0Y3">
    <property type="glycosylation" value="1 site"/>
</dbReference>
<dbReference type="iPTMnet" id="Q8N0Y3"/>
<dbReference type="PhosphoSitePlus" id="Q8N0Y3"/>
<dbReference type="BioMuta" id="OR4N4"/>
<dbReference type="DMDM" id="218511730"/>
<dbReference type="MassIVE" id="Q8N0Y3"/>
<dbReference type="PaxDb" id="9606-ENSP00000332500"/>
<dbReference type="Antibodypedia" id="65186">
    <property type="antibodies" value="82 antibodies from 18 providers"/>
</dbReference>
<dbReference type="DNASU" id="283694"/>
<dbReference type="Ensembl" id="ENST00000328795.6">
    <property type="protein sequence ID" value="ENSP00000332500.4"/>
    <property type="gene ID" value="ENSG00000183706.6"/>
</dbReference>
<dbReference type="Ensembl" id="ENST00000672884.1">
    <property type="protein sequence ID" value="ENSP00000500592.1"/>
    <property type="gene ID" value="ENSG00000288501.1"/>
</dbReference>
<dbReference type="Ensembl" id="ENST00000673262.1">
    <property type="protein sequence ID" value="ENSP00000500203.1"/>
    <property type="gene ID" value="ENSG00000288501.1"/>
</dbReference>
<dbReference type="GeneID" id="283694"/>
<dbReference type="KEGG" id="hsa:283694"/>
<dbReference type="MANE-Select" id="ENST00000328795.6">
    <property type="protein sequence ID" value="ENSP00000332500.4"/>
    <property type="RefSeq nucleotide sequence ID" value="NM_001005241.4"/>
    <property type="RefSeq protein sequence ID" value="NP_001005241.2"/>
</dbReference>
<dbReference type="UCSC" id="uc010tzv.3">
    <property type="organism name" value="human"/>
</dbReference>
<dbReference type="AGR" id="HGNC:15375"/>
<dbReference type="CTD" id="283694"/>
<dbReference type="GeneCards" id="OR4N4"/>
<dbReference type="HGNC" id="HGNC:15375">
    <property type="gene designation" value="OR4N4"/>
</dbReference>
<dbReference type="HPA" id="ENSG00000183706">
    <property type="expression patterns" value="Tissue enriched (testis)"/>
</dbReference>
<dbReference type="neXtProt" id="NX_Q8N0Y3"/>
<dbReference type="PharmGKB" id="PA32332"/>
<dbReference type="VEuPathDB" id="HostDB:ENSG00000183706"/>
<dbReference type="eggNOG" id="ENOG502SKDS">
    <property type="taxonomic scope" value="Eukaryota"/>
</dbReference>
<dbReference type="GeneTree" id="ENSGT00940000162873"/>
<dbReference type="HOGENOM" id="CLU_012526_8_1_1"/>
<dbReference type="InParanoid" id="Q8N0Y3"/>
<dbReference type="OMA" id="CHVRRTA"/>
<dbReference type="PAN-GO" id="Q8N0Y3">
    <property type="GO annotations" value="2 GO annotations based on evolutionary models"/>
</dbReference>
<dbReference type="PhylomeDB" id="Q8N0Y3"/>
<dbReference type="TreeFam" id="TF338273"/>
<dbReference type="PathwayCommons" id="Q8N0Y3"/>
<dbReference type="Reactome" id="R-HSA-9752946">
    <property type="pathway name" value="Expression and translocation of olfactory receptors"/>
</dbReference>
<dbReference type="BioGRID-ORCS" id="102723532">
    <property type="hits" value="0 hits in 5 CRISPR screens"/>
</dbReference>
<dbReference type="BioGRID-ORCS" id="283694">
    <property type="hits" value="29 hits in 694 CRISPR screens"/>
</dbReference>
<dbReference type="GeneWiki" id="OR4N4"/>
<dbReference type="Pharos" id="Q8N0Y3">
    <property type="development level" value="Tdark"/>
</dbReference>
<dbReference type="PRO" id="PR:Q8N0Y3"/>
<dbReference type="Proteomes" id="UP000005640">
    <property type="component" value="Chromosome 15"/>
</dbReference>
<dbReference type="RNAct" id="Q8N0Y3">
    <property type="molecule type" value="protein"/>
</dbReference>
<dbReference type="Bgee" id="ENSG00000183706">
    <property type="expression patterns" value="Expressed in male germ line stem cell (sensu Vertebrata) in testis and 6 other cell types or tissues"/>
</dbReference>
<dbReference type="ExpressionAtlas" id="Q8N0Y3">
    <property type="expression patterns" value="baseline"/>
</dbReference>
<dbReference type="GO" id="GO:0005886">
    <property type="term" value="C:plasma membrane"/>
    <property type="evidence" value="ECO:0000318"/>
    <property type="project" value="GO_Central"/>
</dbReference>
<dbReference type="GO" id="GO:0004930">
    <property type="term" value="F:G protein-coupled receptor activity"/>
    <property type="evidence" value="ECO:0007669"/>
    <property type="project" value="UniProtKB-KW"/>
</dbReference>
<dbReference type="GO" id="GO:0004984">
    <property type="term" value="F:olfactory receptor activity"/>
    <property type="evidence" value="ECO:0000318"/>
    <property type="project" value="GO_Central"/>
</dbReference>
<dbReference type="FunFam" id="1.10.1220.70:FF:000001">
    <property type="entry name" value="Olfactory receptor"/>
    <property type="match status" value="1"/>
</dbReference>
<dbReference type="FunFam" id="1.20.1070.10:FF:000007">
    <property type="entry name" value="Olfactory receptor"/>
    <property type="match status" value="1"/>
</dbReference>
<dbReference type="Gene3D" id="1.20.1070.10">
    <property type="entry name" value="Rhodopsin 7-helix transmembrane proteins"/>
    <property type="match status" value="1"/>
</dbReference>
<dbReference type="InterPro" id="IPR000276">
    <property type="entry name" value="GPCR_Rhodpsn"/>
</dbReference>
<dbReference type="InterPro" id="IPR017452">
    <property type="entry name" value="GPCR_Rhodpsn_7TM"/>
</dbReference>
<dbReference type="InterPro" id="IPR000725">
    <property type="entry name" value="Olfact_rcpt"/>
</dbReference>
<dbReference type="InterPro" id="IPR050427">
    <property type="entry name" value="Olfactory_Receptors"/>
</dbReference>
<dbReference type="PANTHER" id="PTHR48002">
    <property type="entry name" value="OLFACTORY RECEPTOR"/>
    <property type="match status" value="1"/>
</dbReference>
<dbReference type="Pfam" id="PF13853">
    <property type="entry name" value="7tm_4"/>
    <property type="match status" value="1"/>
</dbReference>
<dbReference type="PRINTS" id="PR00237">
    <property type="entry name" value="GPCRRHODOPSN"/>
</dbReference>
<dbReference type="PRINTS" id="PR00245">
    <property type="entry name" value="OLFACTORYR"/>
</dbReference>
<dbReference type="SUPFAM" id="SSF81321">
    <property type="entry name" value="Family A G protein-coupled receptor-like"/>
    <property type="match status" value="1"/>
</dbReference>
<dbReference type="PROSITE" id="PS00237">
    <property type="entry name" value="G_PROTEIN_RECEP_F1_1"/>
    <property type="match status" value="1"/>
</dbReference>
<dbReference type="PROSITE" id="PS50262">
    <property type="entry name" value="G_PROTEIN_RECEP_F1_2"/>
    <property type="match status" value="1"/>
</dbReference>
<name>OR4N4_HUMAN</name>
<proteinExistence type="evidence at transcript level"/>
<accession>Q8N0Y3</accession>
<accession>Q6IEY3</accession>
<accession>Q6IF56</accession>
<feature type="chain" id="PRO_0000150564" description="Olfactory receptor 4N4">
    <location>
        <begin position="1"/>
        <end position="316"/>
    </location>
</feature>
<feature type="topological domain" description="Extracellular" evidence="1">
    <location>
        <begin position="1"/>
        <end position="25"/>
    </location>
</feature>
<feature type="transmembrane region" description="Helical; Name=1" evidence="1">
    <location>
        <begin position="26"/>
        <end position="49"/>
    </location>
</feature>
<feature type="topological domain" description="Cytoplasmic" evidence="1">
    <location>
        <begin position="50"/>
        <end position="57"/>
    </location>
</feature>
<feature type="transmembrane region" description="Helical; Name=2" evidence="1">
    <location>
        <begin position="58"/>
        <end position="79"/>
    </location>
</feature>
<feature type="topological domain" description="Extracellular" evidence="1">
    <location>
        <begin position="80"/>
        <end position="100"/>
    </location>
</feature>
<feature type="transmembrane region" description="Helical; Name=3" evidence="1">
    <location>
        <begin position="101"/>
        <end position="120"/>
    </location>
</feature>
<feature type="topological domain" description="Cytoplasmic" evidence="1">
    <location>
        <begin position="121"/>
        <end position="139"/>
    </location>
</feature>
<feature type="transmembrane region" description="Helical; Name=4" evidence="1">
    <location>
        <begin position="140"/>
        <end position="158"/>
    </location>
</feature>
<feature type="topological domain" description="Extracellular" evidence="1">
    <location>
        <begin position="159"/>
        <end position="195"/>
    </location>
</feature>
<feature type="transmembrane region" description="Helical; Name=5" evidence="1">
    <location>
        <begin position="196"/>
        <end position="219"/>
    </location>
</feature>
<feature type="topological domain" description="Cytoplasmic" evidence="1">
    <location>
        <begin position="220"/>
        <end position="235"/>
    </location>
</feature>
<feature type="transmembrane region" description="Helical; Name=6" evidence="1">
    <location>
        <begin position="236"/>
        <end position="258"/>
    </location>
</feature>
<feature type="topological domain" description="Extracellular" evidence="1">
    <location>
        <begin position="259"/>
        <end position="269"/>
    </location>
</feature>
<feature type="transmembrane region" description="Helical; Name=7" evidence="1">
    <location>
        <begin position="270"/>
        <end position="289"/>
    </location>
</feature>
<feature type="topological domain" description="Cytoplasmic" evidence="1">
    <location>
        <begin position="290"/>
        <end position="316"/>
    </location>
</feature>
<feature type="glycosylation site" description="N-linked (GlcNAc...) asparagine" evidence="1">
    <location>
        <position position="5"/>
    </location>
</feature>
<feature type="disulfide bond" evidence="2">
    <location>
        <begin position="97"/>
        <end position="189"/>
    </location>
</feature>
<feature type="sequence variant" id="VAR_048034" description="In dbSNP:rs535034." evidence="3">
    <original>L</original>
    <variation>F</variation>
    <location>
        <position position="61"/>
    </location>
</feature>
<feature type="sequence variant" id="VAR_048035" description="In dbSNP:rs2808136." evidence="3">
    <original>L</original>
    <variation>F</variation>
    <location>
        <position position="86"/>
    </location>
</feature>
<feature type="sequence variant" id="VAR_048036" description="In dbSNP:rs475947." evidence="3">
    <original>T</original>
    <variation>M</variation>
    <location>
        <position position="239"/>
    </location>
</feature>
<feature type="sequence variant" id="VAR_048037" description="In dbSNP:rs3817271.">
    <original>F</original>
    <variation>L</variation>
    <location>
        <position position="274"/>
    </location>
</feature>
<keyword id="KW-1003">Cell membrane</keyword>
<keyword id="KW-1015">Disulfide bond</keyword>
<keyword id="KW-0297">G-protein coupled receptor</keyword>
<keyword id="KW-0325">Glycoprotein</keyword>
<keyword id="KW-0472">Membrane</keyword>
<keyword id="KW-0552">Olfaction</keyword>
<keyword id="KW-0675">Receptor</keyword>
<keyword id="KW-1185">Reference proteome</keyword>
<keyword id="KW-0716">Sensory transduction</keyword>
<keyword id="KW-0807">Transducer</keyword>
<keyword id="KW-0812">Transmembrane</keyword>
<keyword id="KW-1133">Transmembrane helix</keyword>
<reference key="1">
    <citation type="submission" date="2001-07" db="EMBL/GenBank/DDBJ databases">
        <title>Genome-wide discovery and analysis of human seven transmembrane helix receptor genes.</title>
        <authorList>
            <person name="Suwa M."/>
            <person name="Sato T."/>
            <person name="Okouchi I."/>
            <person name="Arita M."/>
            <person name="Futami K."/>
            <person name="Matsumoto S."/>
            <person name="Tsutsumi S."/>
            <person name="Aburatani H."/>
            <person name="Asai K."/>
            <person name="Akiyama Y."/>
        </authorList>
    </citation>
    <scope>NUCLEOTIDE SEQUENCE [GENOMIC DNA]</scope>
    <scope>VARIANTS PHE-61; PHE-86 AND MET-239</scope>
</reference>
<reference key="2">
    <citation type="submission" date="2005-07" db="EMBL/GenBank/DDBJ databases">
        <authorList>
            <person name="Mural R.J."/>
            <person name="Istrail S."/>
            <person name="Sutton G.G."/>
            <person name="Florea L."/>
            <person name="Halpern A.L."/>
            <person name="Mobarry C.M."/>
            <person name="Lippert R."/>
            <person name="Walenz B."/>
            <person name="Shatkay H."/>
            <person name="Dew I."/>
            <person name="Miller J.R."/>
            <person name="Flanigan M.J."/>
            <person name="Edwards N.J."/>
            <person name="Bolanos R."/>
            <person name="Fasulo D."/>
            <person name="Halldorsson B.V."/>
            <person name="Hannenhalli S."/>
            <person name="Turner R."/>
            <person name="Yooseph S."/>
            <person name="Lu F."/>
            <person name="Nusskern D.R."/>
            <person name="Shue B.C."/>
            <person name="Zheng X.H."/>
            <person name="Zhong F."/>
            <person name="Delcher A.L."/>
            <person name="Huson D.H."/>
            <person name="Kravitz S.A."/>
            <person name="Mouchard L."/>
            <person name="Reinert K."/>
            <person name="Remington K.A."/>
            <person name="Clark A.G."/>
            <person name="Waterman M.S."/>
            <person name="Eichler E.E."/>
            <person name="Adams M.D."/>
            <person name="Hunkapiller M.W."/>
            <person name="Myers E.W."/>
            <person name="Venter J.C."/>
        </authorList>
    </citation>
    <scope>NUCLEOTIDE SEQUENCE [LARGE SCALE GENOMIC DNA]</scope>
</reference>
<reference key="3">
    <citation type="journal article" date="2004" name="Genome Res.">
        <title>The status, quality, and expansion of the NIH full-length cDNA project: the Mammalian Gene Collection (MGC).</title>
        <authorList>
            <consortium name="The MGC Project Team"/>
        </authorList>
    </citation>
    <scope>NUCLEOTIDE SEQUENCE [LARGE SCALE MRNA]</scope>
</reference>
<reference key="4">
    <citation type="journal article" date="2004" name="Proc. Natl. Acad. Sci. U.S.A.">
        <title>The human olfactory receptor gene family.</title>
        <authorList>
            <person name="Malnic B."/>
            <person name="Godfrey P.A."/>
            <person name="Buck L.B."/>
        </authorList>
    </citation>
    <scope>IDENTIFICATION</scope>
</reference>
<reference key="5">
    <citation type="journal article" date="2004" name="Proc. Natl. Acad. Sci. U.S.A.">
        <authorList>
            <person name="Malnic B."/>
            <person name="Godfrey P.A."/>
            <person name="Buck L.B."/>
        </authorList>
    </citation>
    <scope>ERRATUM OF PUBMED:14983052</scope>
</reference>
<gene>
    <name type="primary">OR4N4</name>
</gene>
<sequence>MKIANNTVVTEFILLGLTQSQDIQLLVFVLILIFYLIILPGNFLIIFTIRSDPGLTAPLYLFLGNLAFLDASYSFIVAPRMLVDFLSEKKVISYRGCITQLFFLHFLGGGEGLLLVVMAFDRYIAICRPLHCSTVMNPRACYAMMLALWLGGFVHSIIQVVLILRLPFCGPNQLDNFFCDVRQVIKLACTDMFVVELLMVFNSGLMTLLCFLGLLASYAVILCHVRRAASEGKNKAMSTCTTRVIIILLMFGPAIFIYMCPFRALPADKMVSLFHTVIFPLMNPMIYTLRNQEVKTSMKRLLSRHVVCQVDFIIRN</sequence>